<dbReference type="EC" id="4.98.1.1" evidence="1"/>
<dbReference type="EMBL" id="AL590842">
    <property type="protein sequence ID" value="CAL21713.1"/>
    <property type="molecule type" value="Genomic_DNA"/>
</dbReference>
<dbReference type="EMBL" id="AE009952">
    <property type="protein sequence ID" value="AAM84647.1"/>
    <property type="molecule type" value="Genomic_DNA"/>
</dbReference>
<dbReference type="EMBL" id="AE017042">
    <property type="protein sequence ID" value="AAS61078.1"/>
    <property type="molecule type" value="Genomic_DNA"/>
</dbReference>
<dbReference type="PIR" id="AF0378">
    <property type="entry name" value="AF0378"/>
</dbReference>
<dbReference type="RefSeq" id="WP_002208599.1">
    <property type="nucleotide sequence ID" value="NZ_WUCM01000009.1"/>
</dbReference>
<dbReference type="RefSeq" id="YP_002348025.1">
    <property type="nucleotide sequence ID" value="NC_003143.1"/>
</dbReference>
<dbReference type="SMR" id="Q8ZC98"/>
<dbReference type="STRING" id="214092.YPO3117"/>
<dbReference type="PaxDb" id="214092-YPO3117"/>
<dbReference type="DNASU" id="1146013"/>
<dbReference type="EnsemblBacteria" id="AAS61078">
    <property type="protein sequence ID" value="AAS61078"/>
    <property type="gene ID" value="YP_0813"/>
</dbReference>
<dbReference type="GeneID" id="57975594"/>
<dbReference type="KEGG" id="ype:YPO3117"/>
<dbReference type="KEGG" id="ypk:y1066"/>
<dbReference type="KEGG" id="ypm:YP_0813"/>
<dbReference type="PATRIC" id="fig|214092.21.peg.3572"/>
<dbReference type="eggNOG" id="COG0276">
    <property type="taxonomic scope" value="Bacteria"/>
</dbReference>
<dbReference type="HOGENOM" id="CLU_018884_0_0_6"/>
<dbReference type="OMA" id="DPYHCEC"/>
<dbReference type="OrthoDB" id="9809741at2"/>
<dbReference type="UniPathway" id="UPA00252">
    <property type="reaction ID" value="UER00325"/>
</dbReference>
<dbReference type="Proteomes" id="UP000000815">
    <property type="component" value="Chromosome"/>
</dbReference>
<dbReference type="Proteomes" id="UP000001019">
    <property type="component" value="Chromosome"/>
</dbReference>
<dbReference type="Proteomes" id="UP000002490">
    <property type="component" value="Chromosome"/>
</dbReference>
<dbReference type="GO" id="GO:0005737">
    <property type="term" value="C:cytoplasm"/>
    <property type="evidence" value="ECO:0007669"/>
    <property type="project" value="UniProtKB-SubCell"/>
</dbReference>
<dbReference type="GO" id="GO:0004325">
    <property type="term" value="F:ferrochelatase activity"/>
    <property type="evidence" value="ECO:0000318"/>
    <property type="project" value="GO_Central"/>
</dbReference>
<dbReference type="GO" id="GO:0046872">
    <property type="term" value="F:metal ion binding"/>
    <property type="evidence" value="ECO:0007669"/>
    <property type="project" value="UniProtKB-KW"/>
</dbReference>
<dbReference type="GO" id="GO:0006783">
    <property type="term" value="P:heme biosynthetic process"/>
    <property type="evidence" value="ECO:0000318"/>
    <property type="project" value="GO_Central"/>
</dbReference>
<dbReference type="CDD" id="cd00419">
    <property type="entry name" value="Ferrochelatase_C"/>
    <property type="match status" value="1"/>
</dbReference>
<dbReference type="CDD" id="cd03411">
    <property type="entry name" value="Ferrochelatase_N"/>
    <property type="match status" value="1"/>
</dbReference>
<dbReference type="FunFam" id="3.40.50.1400:FF:000004">
    <property type="entry name" value="Ferrochelatase"/>
    <property type="match status" value="1"/>
</dbReference>
<dbReference type="Gene3D" id="3.40.50.1400">
    <property type="match status" value="2"/>
</dbReference>
<dbReference type="HAMAP" id="MF_00323">
    <property type="entry name" value="Ferrochelatase"/>
    <property type="match status" value="1"/>
</dbReference>
<dbReference type="InterPro" id="IPR001015">
    <property type="entry name" value="Ferrochelatase"/>
</dbReference>
<dbReference type="InterPro" id="IPR019772">
    <property type="entry name" value="Ferrochelatase_AS"/>
</dbReference>
<dbReference type="InterPro" id="IPR033644">
    <property type="entry name" value="Ferrochelatase_C"/>
</dbReference>
<dbReference type="InterPro" id="IPR033659">
    <property type="entry name" value="Ferrochelatase_N"/>
</dbReference>
<dbReference type="NCBIfam" id="TIGR00109">
    <property type="entry name" value="hemH"/>
    <property type="match status" value="1"/>
</dbReference>
<dbReference type="PANTHER" id="PTHR11108">
    <property type="entry name" value="FERROCHELATASE"/>
    <property type="match status" value="1"/>
</dbReference>
<dbReference type="PANTHER" id="PTHR11108:SF1">
    <property type="entry name" value="FERROCHELATASE, MITOCHONDRIAL"/>
    <property type="match status" value="1"/>
</dbReference>
<dbReference type="Pfam" id="PF00762">
    <property type="entry name" value="Ferrochelatase"/>
    <property type="match status" value="1"/>
</dbReference>
<dbReference type="SUPFAM" id="SSF53800">
    <property type="entry name" value="Chelatase"/>
    <property type="match status" value="1"/>
</dbReference>
<dbReference type="PROSITE" id="PS00534">
    <property type="entry name" value="FERROCHELATASE"/>
    <property type="match status" value="1"/>
</dbReference>
<name>HEMH_YERPE</name>
<protein>
    <recommendedName>
        <fullName evidence="1">Ferrochelatase</fullName>
        <ecNumber evidence="1">4.98.1.1</ecNumber>
    </recommendedName>
    <alternativeName>
        <fullName evidence="1">Heme synthase</fullName>
    </alternativeName>
    <alternativeName>
        <fullName evidence="1">Protoheme ferro-lyase</fullName>
    </alternativeName>
</protein>
<keyword id="KW-0963">Cytoplasm</keyword>
<keyword id="KW-0350">Heme biosynthesis</keyword>
<keyword id="KW-0408">Iron</keyword>
<keyword id="KW-0456">Lyase</keyword>
<keyword id="KW-0479">Metal-binding</keyword>
<keyword id="KW-0627">Porphyrin biosynthesis</keyword>
<keyword id="KW-1185">Reference proteome</keyword>
<reference key="1">
    <citation type="journal article" date="2001" name="Nature">
        <title>Genome sequence of Yersinia pestis, the causative agent of plague.</title>
        <authorList>
            <person name="Parkhill J."/>
            <person name="Wren B.W."/>
            <person name="Thomson N.R."/>
            <person name="Titball R.W."/>
            <person name="Holden M.T.G."/>
            <person name="Prentice M.B."/>
            <person name="Sebaihia M."/>
            <person name="James K.D."/>
            <person name="Churcher C.M."/>
            <person name="Mungall K.L."/>
            <person name="Baker S."/>
            <person name="Basham D."/>
            <person name="Bentley S.D."/>
            <person name="Brooks K."/>
            <person name="Cerdeno-Tarraga A.-M."/>
            <person name="Chillingworth T."/>
            <person name="Cronin A."/>
            <person name="Davies R.M."/>
            <person name="Davis P."/>
            <person name="Dougan G."/>
            <person name="Feltwell T."/>
            <person name="Hamlin N."/>
            <person name="Holroyd S."/>
            <person name="Jagels K."/>
            <person name="Karlyshev A.V."/>
            <person name="Leather S."/>
            <person name="Moule S."/>
            <person name="Oyston P.C.F."/>
            <person name="Quail M.A."/>
            <person name="Rutherford K.M."/>
            <person name="Simmonds M."/>
            <person name="Skelton J."/>
            <person name="Stevens K."/>
            <person name="Whitehead S."/>
            <person name="Barrell B.G."/>
        </authorList>
    </citation>
    <scope>NUCLEOTIDE SEQUENCE [LARGE SCALE GENOMIC DNA]</scope>
    <source>
        <strain>CO-92 / Biovar Orientalis</strain>
    </source>
</reference>
<reference key="2">
    <citation type="journal article" date="2002" name="J. Bacteriol.">
        <title>Genome sequence of Yersinia pestis KIM.</title>
        <authorList>
            <person name="Deng W."/>
            <person name="Burland V."/>
            <person name="Plunkett G. III"/>
            <person name="Boutin A."/>
            <person name="Mayhew G.F."/>
            <person name="Liss P."/>
            <person name="Perna N.T."/>
            <person name="Rose D.J."/>
            <person name="Mau B."/>
            <person name="Zhou S."/>
            <person name="Schwartz D.C."/>
            <person name="Fetherston J.D."/>
            <person name="Lindler L.E."/>
            <person name="Brubaker R.R."/>
            <person name="Plano G.V."/>
            <person name="Straley S.C."/>
            <person name="McDonough K.A."/>
            <person name="Nilles M.L."/>
            <person name="Matson J.S."/>
            <person name="Blattner F.R."/>
            <person name="Perry R.D."/>
        </authorList>
    </citation>
    <scope>NUCLEOTIDE SEQUENCE [LARGE SCALE GENOMIC DNA]</scope>
    <source>
        <strain>KIM10+ / Biovar Mediaevalis</strain>
    </source>
</reference>
<reference key="3">
    <citation type="journal article" date="2004" name="DNA Res.">
        <title>Complete genome sequence of Yersinia pestis strain 91001, an isolate avirulent to humans.</title>
        <authorList>
            <person name="Song Y."/>
            <person name="Tong Z."/>
            <person name="Wang J."/>
            <person name="Wang L."/>
            <person name="Guo Z."/>
            <person name="Han Y."/>
            <person name="Zhang J."/>
            <person name="Pei D."/>
            <person name="Zhou D."/>
            <person name="Qin H."/>
            <person name="Pang X."/>
            <person name="Han Y."/>
            <person name="Zhai J."/>
            <person name="Li M."/>
            <person name="Cui B."/>
            <person name="Qi Z."/>
            <person name="Jin L."/>
            <person name="Dai R."/>
            <person name="Chen F."/>
            <person name="Li S."/>
            <person name="Ye C."/>
            <person name="Du Z."/>
            <person name="Lin W."/>
            <person name="Wang J."/>
            <person name="Yu J."/>
            <person name="Yang H."/>
            <person name="Wang J."/>
            <person name="Huang P."/>
            <person name="Yang R."/>
        </authorList>
    </citation>
    <scope>NUCLEOTIDE SEQUENCE [LARGE SCALE GENOMIC DNA]</scope>
    <source>
        <strain>91001 / Biovar Mediaevalis</strain>
    </source>
</reference>
<accession>Q8ZC98</accession>
<accession>Q0WCG3</accession>
<comment type="function">
    <text evidence="1">Catalyzes the ferrous insertion into protoporphyrin IX.</text>
</comment>
<comment type="catalytic activity">
    <reaction evidence="1">
        <text>heme b + 2 H(+) = protoporphyrin IX + Fe(2+)</text>
        <dbReference type="Rhea" id="RHEA:22584"/>
        <dbReference type="ChEBI" id="CHEBI:15378"/>
        <dbReference type="ChEBI" id="CHEBI:29033"/>
        <dbReference type="ChEBI" id="CHEBI:57306"/>
        <dbReference type="ChEBI" id="CHEBI:60344"/>
        <dbReference type="EC" id="4.98.1.1"/>
    </reaction>
</comment>
<comment type="pathway">
    <text evidence="1">Porphyrin-containing compound metabolism; protoheme biosynthesis; protoheme from protoporphyrin-IX: step 1/1.</text>
</comment>
<comment type="subcellular location">
    <subcellularLocation>
        <location evidence="1">Cytoplasm</location>
    </subcellularLocation>
</comment>
<comment type="similarity">
    <text evidence="1">Belongs to the ferrochelatase family.</text>
</comment>
<sequence>MMQSKPGVLMVNLGTPDAPTSKAIKRYLAEFLSDRRVVDTSPLLWWPLLHGVILPLRSPRVAKLYQSVWMEEGSPLLVYSRRQQKALAARMPDIPVELGMSYGSPNLPEAIEKLLAQGVTNLVILPLYPQYSCSTSAAVWDAVARVLKGYRRLPSISFIRDYAEHPAYISALKQSVERSFAEHGQPDRLVMSFHGIPKRYAQLGDDYPIRCEDTSRALRAALPLPAEKIIMTYQSRFGREPWLTPYTDETLKSLPSQGVKHIQLICPGFSADCLETLEEIKEQNREFFLHAGGEKFEYIPALNDDEGHIALLEQLIRHNI</sequence>
<feature type="chain" id="PRO_0000175234" description="Ferrochelatase">
    <location>
        <begin position="1"/>
        <end position="320"/>
    </location>
</feature>
<feature type="binding site" evidence="1">
    <location>
        <position position="194"/>
    </location>
    <ligand>
        <name>Fe cation</name>
        <dbReference type="ChEBI" id="CHEBI:24875"/>
    </ligand>
</feature>
<feature type="binding site" evidence="1">
    <location>
        <position position="275"/>
    </location>
    <ligand>
        <name>Fe cation</name>
        <dbReference type="ChEBI" id="CHEBI:24875"/>
    </ligand>
</feature>
<organism>
    <name type="scientific">Yersinia pestis</name>
    <dbReference type="NCBI Taxonomy" id="632"/>
    <lineage>
        <taxon>Bacteria</taxon>
        <taxon>Pseudomonadati</taxon>
        <taxon>Pseudomonadota</taxon>
        <taxon>Gammaproteobacteria</taxon>
        <taxon>Enterobacterales</taxon>
        <taxon>Yersiniaceae</taxon>
        <taxon>Yersinia</taxon>
    </lineage>
</organism>
<evidence type="ECO:0000255" key="1">
    <source>
        <dbReference type="HAMAP-Rule" id="MF_00323"/>
    </source>
</evidence>
<proteinExistence type="inferred from homology"/>
<gene>
    <name evidence="1" type="primary">hemH</name>
    <name type="ordered locus">YPO3117</name>
    <name type="ordered locus">y1066</name>
    <name type="ordered locus">YP_0813</name>
</gene>